<accession>Q6GLJ0</accession>
<name>MFN2A_XENLA</name>
<gene>
    <name type="primary">slc25a28-a</name>
    <name type="synonym">mfrn2-a</name>
</gene>
<organism>
    <name type="scientific">Xenopus laevis</name>
    <name type="common">African clawed frog</name>
    <dbReference type="NCBI Taxonomy" id="8355"/>
    <lineage>
        <taxon>Eukaryota</taxon>
        <taxon>Metazoa</taxon>
        <taxon>Chordata</taxon>
        <taxon>Craniata</taxon>
        <taxon>Vertebrata</taxon>
        <taxon>Euteleostomi</taxon>
        <taxon>Amphibia</taxon>
        <taxon>Batrachia</taxon>
        <taxon>Anura</taxon>
        <taxon>Pipoidea</taxon>
        <taxon>Pipidae</taxon>
        <taxon>Xenopodinae</taxon>
        <taxon>Xenopus</taxon>
        <taxon>Xenopus</taxon>
    </lineage>
</organism>
<keyword id="KW-0406">Ion transport</keyword>
<keyword id="KW-0408">Iron</keyword>
<keyword id="KW-0410">Iron transport</keyword>
<keyword id="KW-0472">Membrane</keyword>
<keyword id="KW-0496">Mitochondrion</keyword>
<keyword id="KW-0999">Mitochondrion inner membrane</keyword>
<keyword id="KW-1185">Reference proteome</keyword>
<keyword id="KW-0812">Transmembrane</keyword>
<keyword id="KW-1133">Transmembrane helix</keyword>
<keyword id="KW-0813">Transport</keyword>
<comment type="function">
    <text evidence="1">Mitochondrial iron transporter that mediates iron uptake. Probably required for heme synthesis of hemoproteins and Fe-S cluster assembly in non-erythroid cells.</text>
</comment>
<comment type="catalytic activity">
    <reaction evidence="1">
        <text>Fe(2+)(in) = Fe(2+)(out)</text>
        <dbReference type="Rhea" id="RHEA:28486"/>
        <dbReference type="ChEBI" id="CHEBI:29033"/>
    </reaction>
</comment>
<comment type="subcellular location">
    <subcellularLocation>
        <location evidence="2">Mitochondrion inner membrane</location>
        <topology evidence="3">Multi-pass membrane protein</topology>
    </subcellularLocation>
</comment>
<comment type="similarity">
    <text evidence="4">Belongs to the mitochondrial carrier (TC 2.A.29) family.</text>
</comment>
<feature type="chain" id="PRO_0000235258" description="Mitoferrin-2A">
    <location>
        <begin position="1"/>
        <end position="186"/>
    </location>
</feature>
<feature type="transmembrane region" description="Helical; Name=1" evidence="3">
    <location>
        <begin position="77"/>
        <end position="96"/>
    </location>
</feature>
<feature type="transmembrane region" description="Helical; Name=2" evidence="3">
    <location>
        <begin position="137"/>
        <end position="157"/>
    </location>
</feature>
<feature type="transmembrane region" description="Helical; Name=3" evidence="3">
    <location>
        <begin position="172"/>
        <end position="185"/>
    </location>
</feature>
<feature type="repeat" description="Solcar">
    <location>
        <begin position="75"/>
        <end position="163"/>
    </location>
</feature>
<sequence length="186" mass="19762">MELEAVLKERTAAAGDPGRVLGAWVRSGWSAAGPSVLESEGGSGGPLAFESTSSRILELASKDNEPEYEALPDGSNVTTHMLAGAVAGVMEHCLMYPVDCVKTRMQSLQPDPAARYRNVMDALSKIVRTEGFWRPLRGLNVTATGAGPAHALYFACYEKLKKTLSDIIHPGGNSHIANGTDYSCPA</sequence>
<dbReference type="EMBL" id="BC074495">
    <property type="protein sequence ID" value="AAH74495.1"/>
    <property type="molecule type" value="mRNA"/>
</dbReference>
<dbReference type="RefSeq" id="NP_001086329.1">
    <property type="nucleotide sequence ID" value="NM_001092860.1"/>
</dbReference>
<dbReference type="SMR" id="Q6GLJ0"/>
<dbReference type="DNASU" id="444758"/>
<dbReference type="GeneID" id="444758"/>
<dbReference type="KEGG" id="xla:444758"/>
<dbReference type="AGR" id="Xenbase:XB-GENE-6254369"/>
<dbReference type="CTD" id="444758"/>
<dbReference type="Xenbase" id="XB-GENE-6254369">
    <property type="gene designation" value="slc25a28.S"/>
</dbReference>
<dbReference type="OrthoDB" id="43906at2759"/>
<dbReference type="Proteomes" id="UP000186698">
    <property type="component" value="Chromosome 7S"/>
</dbReference>
<dbReference type="Bgee" id="444758">
    <property type="expression patterns" value="Expressed in zone of skin and 19 other cell types or tissues"/>
</dbReference>
<dbReference type="GO" id="GO:0005743">
    <property type="term" value="C:mitochondrial inner membrane"/>
    <property type="evidence" value="ECO:0007669"/>
    <property type="project" value="UniProtKB-SubCell"/>
</dbReference>
<dbReference type="GO" id="GO:0015093">
    <property type="term" value="F:ferrous iron transmembrane transporter activity"/>
    <property type="evidence" value="ECO:0007669"/>
    <property type="project" value="TreeGrafter"/>
</dbReference>
<dbReference type="GO" id="GO:0048250">
    <property type="term" value="P:iron import into the mitochondrion"/>
    <property type="evidence" value="ECO:0007669"/>
    <property type="project" value="TreeGrafter"/>
</dbReference>
<dbReference type="Gene3D" id="1.50.40.10">
    <property type="entry name" value="Mitochondrial carrier domain"/>
    <property type="match status" value="1"/>
</dbReference>
<dbReference type="InterPro" id="IPR018108">
    <property type="entry name" value="Mitochondrial_sb/sol_carrier"/>
</dbReference>
<dbReference type="InterPro" id="IPR023395">
    <property type="entry name" value="Mt_carrier_dom_sf"/>
</dbReference>
<dbReference type="PANTHER" id="PTHR45758">
    <property type="entry name" value="MITOFERRIN-1-RELATED"/>
    <property type="match status" value="1"/>
</dbReference>
<dbReference type="PANTHER" id="PTHR45758:SF20">
    <property type="entry name" value="MITOFERRIN-2"/>
    <property type="match status" value="1"/>
</dbReference>
<dbReference type="Pfam" id="PF00153">
    <property type="entry name" value="Mito_carr"/>
    <property type="match status" value="1"/>
</dbReference>
<dbReference type="SUPFAM" id="SSF103506">
    <property type="entry name" value="Mitochondrial carrier"/>
    <property type="match status" value="1"/>
</dbReference>
<dbReference type="PROSITE" id="PS50920">
    <property type="entry name" value="SOLCAR"/>
    <property type="match status" value="1"/>
</dbReference>
<proteinExistence type="evidence at transcript level"/>
<reference key="1">
    <citation type="submission" date="2004-06" db="EMBL/GenBank/DDBJ databases">
        <authorList>
            <consortium name="NIH - Xenopus Gene Collection (XGC) project"/>
        </authorList>
    </citation>
    <scope>NUCLEOTIDE SEQUENCE [LARGE SCALE MRNA]</scope>
    <source>
        <tissue>Brain</tissue>
    </source>
</reference>
<evidence type="ECO:0000250" key="1">
    <source>
        <dbReference type="UniProtKB" id="Q7T292"/>
    </source>
</evidence>
<evidence type="ECO:0000250" key="2">
    <source>
        <dbReference type="UniProtKB" id="Q96A46"/>
    </source>
</evidence>
<evidence type="ECO:0000255" key="3"/>
<evidence type="ECO:0000305" key="4"/>
<protein>
    <recommendedName>
        <fullName>Mitoferrin-2A</fullName>
    </recommendedName>
    <alternativeName>
        <fullName>Mitochondrial iron transporter 2-A</fullName>
    </alternativeName>
    <alternativeName>
        <fullName>Solute carrier family 25 member 28-A</fullName>
    </alternativeName>
</protein>